<name>LIPA_SHESH</name>
<gene>
    <name evidence="1" type="primary">lipA</name>
    <name type="ordered locus">Ssed_3492</name>
</gene>
<comment type="function">
    <text evidence="1">Catalyzes the radical-mediated insertion of two sulfur atoms into the C-6 and C-8 positions of the octanoyl moiety bound to the lipoyl domains of lipoate-dependent enzymes, thereby converting the octanoylated domains into lipoylated derivatives.</text>
</comment>
<comment type="catalytic activity">
    <reaction evidence="1">
        <text>[[Fe-S] cluster scaffold protein carrying a second [4Fe-4S](2+) cluster] + N(6)-octanoyl-L-lysyl-[protein] + 2 oxidized [2Fe-2S]-[ferredoxin] + 2 S-adenosyl-L-methionine + 4 H(+) = [[Fe-S] cluster scaffold protein] + N(6)-[(R)-dihydrolipoyl]-L-lysyl-[protein] + 4 Fe(3+) + 2 hydrogen sulfide + 2 5'-deoxyadenosine + 2 L-methionine + 2 reduced [2Fe-2S]-[ferredoxin]</text>
        <dbReference type="Rhea" id="RHEA:16585"/>
        <dbReference type="Rhea" id="RHEA-COMP:9928"/>
        <dbReference type="Rhea" id="RHEA-COMP:10000"/>
        <dbReference type="Rhea" id="RHEA-COMP:10001"/>
        <dbReference type="Rhea" id="RHEA-COMP:10475"/>
        <dbReference type="Rhea" id="RHEA-COMP:14568"/>
        <dbReference type="Rhea" id="RHEA-COMP:14569"/>
        <dbReference type="ChEBI" id="CHEBI:15378"/>
        <dbReference type="ChEBI" id="CHEBI:17319"/>
        <dbReference type="ChEBI" id="CHEBI:29034"/>
        <dbReference type="ChEBI" id="CHEBI:29919"/>
        <dbReference type="ChEBI" id="CHEBI:33722"/>
        <dbReference type="ChEBI" id="CHEBI:33737"/>
        <dbReference type="ChEBI" id="CHEBI:33738"/>
        <dbReference type="ChEBI" id="CHEBI:57844"/>
        <dbReference type="ChEBI" id="CHEBI:59789"/>
        <dbReference type="ChEBI" id="CHEBI:78809"/>
        <dbReference type="ChEBI" id="CHEBI:83100"/>
        <dbReference type="EC" id="2.8.1.8"/>
    </reaction>
</comment>
<comment type="cofactor">
    <cofactor evidence="1">
        <name>[4Fe-4S] cluster</name>
        <dbReference type="ChEBI" id="CHEBI:49883"/>
    </cofactor>
    <text evidence="1">Binds 2 [4Fe-4S] clusters per subunit. One cluster is coordinated with 3 cysteines and an exchangeable S-adenosyl-L-methionine.</text>
</comment>
<comment type="pathway">
    <text evidence="1">Protein modification; protein lipoylation via endogenous pathway; protein N(6)-(lipoyl)lysine from octanoyl-[acyl-carrier-protein]: step 2/2.</text>
</comment>
<comment type="subcellular location">
    <subcellularLocation>
        <location evidence="1">Cytoplasm</location>
    </subcellularLocation>
</comment>
<comment type="similarity">
    <text evidence="1">Belongs to the radical SAM superfamily. Lipoyl synthase family.</text>
</comment>
<sequence length="321" mass="36437">MSRPERLQPGVKLRDADKVARIPVKVVPSERETMLRKPDWLRVKLPASSQRIDDIKKALRKNELHSVCEEASCPNLAECFNHGTATFMILGAICTRRCPFCDVAHGRPLKPDANEPKKMAQTIKDMKLKYVVITSVDRDDLRDGGAQHFADCIREIRLLNPSIKIEILVPDFRGRIDAALDILATEPPDVFNHNLETAPMHYRKARPGANYQWSLDLLKKFKERHPDIPTKSGLMMGLGETNDQIAEVLKDLRAHNVEMLTLGQYLQPSKFHLRVERYVPPAEFDELREFAESIGFTHAACGPMVRSSYHADLQAQGKEVK</sequence>
<protein>
    <recommendedName>
        <fullName evidence="1">Lipoyl synthase</fullName>
        <ecNumber evidence="1">2.8.1.8</ecNumber>
    </recommendedName>
    <alternativeName>
        <fullName evidence="1">Lip-syn</fullName>
        <shortName evidence="1">LS</shortName>
    </alternativeName>
    <alternativeName>
        <fullName evidence="1">Lipoate synthase</fullName>
    </alternativeName>
    <alternativeName>
        <fullName evidence="1">Lipoic acid synthase</fullName>
    </alternativeName>
    <alternativeName>
        <fullName evidence="1">Sulfur insertion protein LipA</fullName>
    </alternativeName>
</protein>
<reference key="1">
    <citation type="submission" date="2007-08" db="EMBL/GenBank/DDBJ databases">
        <title>Complete sequence of Shewanella sediminis HAW-EB3.</title>
        <authorList>
            <consortium name="US DOE Joint Genome Institute"/>
            <person name="Copeland A."/>
            <person name="Lucas S."/>
            <person name="Lapidus A."/>
            <person name="Barry K."/>
            <person name="Glavina del Rio T."/>
            <person name="Dalin E."/>
            <person name="Tice H."/>
            <person name="Pitluck S."/>
            <person name="Chertkov O."/>
            <person name="Brettin T."/>
            <person name="Bruce D."/>
            <person name="Detter J.C."/>
            <person name="Han C."/>
            <person name="Schmutz J."/>
            <person name="Larimer F."/>
            <person name="Land M."/>
            <person name="Hauser L."/>
            <person name="Kyrpides N."/>
            <person name="Kim E."/>
            <person name="Zhao J.-S."/>
            <person name="Richardson P."/>
        </authorList>
    </citation>
    <scope>NUCLEOTIDE SEQUENCE [LARGE SCALE GENOMIC DNA]</scope>
    <source>
        <strain>HAW-EB3</strain>
    </source>
</reference>
<organism>
    <name type="scientific">Shewanella sediminis (strain HAW-EB3)</name>
    <dbReference type="NCBI Taxonomy" id="425104"/>
    <lineage>
        <taxon>Bacteria</taxon>
        <taxon>Pseudomonadati</taxon>
        <taxon>Pseudomonadota</taxon>
        <taxon>Gammaproteobacteria</taxon>
        <taxon>Alteromonadales</taxon>
        <taxon>Shewanellaceae</taxon>
        <taxon>Shewanella</taxon>
    </lineage>
</organism>
<accession>A8FZ23</accession>
<evidence type="ECO:0000255" key="1">
    <source>
        <dbReference type="HAMAP-Rule" id="MF_00206"/>
    </source>
</evidence>
<evidence type="ECO:0000255" key="2">
    <source>
        <dbReference type="PROSITE-ProRule" id="PRU01266"/>
    </source>
</evidence>
<dbReference type="EC" id="2.8.1.8" evidence="1"/>
<dbReference type="EMBL" id="CP000821">
    <property type="protein sequence ID" value="ABV38096.1"/>
    <property type="molecule type" value="Genomic_DNA"/>
</dbReference>
<dbReference type="RefSeq" id="WP_012143826.1">
    <property type="nucleotide sequence ID" value="NC_009831.1"/>
</dbReference>
<dbReference type="SMR" id="A8FZ23"/>
<dbReference type="STRING" id="425104.Ssed_3492"/>
<dbReference type="KEGG" id="sse:Ssed_3492"/>
<dbReference type="eggNOG" id="COG0320">
    <property type="taxonomic scope" value="Bacteria"/>
</dbReference>
<dbReference type="HOGENOM" id="CLU_033144_2_1_6"/>
<dbReference type="OrthoDB" id="9787898at2"/>
<dbReference type="UniPathway" id="UPA00538">
    <property type="reaction ID" value="UER00593"/>
</dbReference>
<dbReference type="Proteomes" id="UP000002015">
    <property type="component" value="Chromosome"/>
</dbReference>
<dbReference type="GO" id="GO:0005737">
    <property type="term" value="C:cytoplasm"/>
    <property type="evidence" value="ECO:0007669"/>
    <property type="project" value="UniProtKB-SubCell"/>
</dbReference>
<dbReference type="GO" id="GO:0051539">
    <property type="term" value="F:4 iron, 4 sulfur cluster binding"/>
    <property type="evidence" value="ECO:0007669"/>
    <property type="project" value="UniProtKB-UniRule"/>
</dbReference>
<dbReference type="GO" id="GO:0016992">
    <property type="term" value="F:lipoate synthase activity"/>
    <property type="evidence" value="ECO:0007669"/>
    <property type="project" value="UniProtKB-UniRule"/>
</dbReference>
<dbReference type="GO" id="GO:0046872">
    <property type="term" value="F:metal ion binding"/>
    <property type="evidence" value="ECO:0007669"/>
    <property type="project" value="UniProtKB-KW"/>
</dbReference>
<dbReference type="CDD" id="cd01335">
    <property type="entry name" value="Radical_SAM"/>
    <property type="match status" value="1"/>
</dbReference>
<dbReference type="FunFam" id="3.20.20.70:FF:000023">
    <property type="entry name" value="Lipoyl synthase"/>
    <property type="match status" value="1"/>
</dbReference>
<dbReference type="Gene3D" id="3.20.20.70">
    <property type="entry name" value="Aldolase class I"/>
    <property type="match status" value="1"/>
</dbReference>
<dbReference type="HAMAP" id="MF_00206">
    <property type="entry name" value="Lipoyl_synth"/>
    <property type="match status" value="1"/>
</dbReference>
<dbReference type="InterPro" id="IPR013785">
    <property type="entry name" value="Aldolase_TIM"/>
</dbReference>
<dbReference type="InterPro" id="IPR006638">
    <property type="entry name" value="Elp3/MiaA/NifB-like_rSAM"/>
</dbReference>
<dbReference type="InterPro" id="IPR031691">
    <property type="entry name" value="LIAS_N"/>
</dbReference>
<dbReference type="InterPro" id="IPR003698">
    <property type="entry name" value="Lipoyl_synth"/>
</dbReference>
<dbReference type="InterPro" id="IPR007197">
    <property type="entry name" value="rSAM"/>
</dbReference>
<dbReference type="NCBIfam" id="TIGR00510">
    <property type="entry name" value="lipA"/>
    <property type="match status" value="1"/>
</dbReference>
<dbReference type="NCBIfam" id="NF004019">
    <property type="entry name" value="PRK05481.1"/>
    <property type="match status" value="1"/>
</dbReference>
<dbReference type="NCBIfam" id="NF009544">
    <property type="entry name" value="PRK12928.1"/>
    <property type="match status" value="1"/>
</dbReference>
<dbReference type="PANTHER" id="PTHR10949">
    <property type="entry name" value="LIPOYL SYNTHASE"/>
    <property type="match status" value="1"/>
</dbReference>
<dbReference type="PANTHER" id="PTHR10949:SF0">
    <property type="entry name" value="LIPOYL SYNTHASE, MITOCHONDRIAL"/>
    <property type="match status" value="1"/>
</dbReference>
<dbReference type="Pfam" id="PF16881">
    <property type="entry name" value="LIAS_N"/>
    <property type="match status" value="1"/>
</dbReference>
<dbReference type="Pfam" id="PF04055">
    <property type="entry name" value="Radical_SAM"/>
    <property type="match status" value="1"/>
</dbReference>
<dbReference type="PIRSF" id="PIRSF005963">
    <property type="entry name" value="Lipoyl_synth"/>
    <property type="match status" value="1"/>
</dbReference>
<dbReference type="SFLD" id="SFLDF00271">
    <property type="entry name" value="lipoyl_synthase"/>
    <property type="match status" value="1"/>
</dbReference>
<dbReference type="SFLD" id="SFLDS00029">
    <property type="entry name" value="Radical_SAM"/>
    <property type="match status" value="1"/>
</dbReference>
<dbReference type="SMART" id="SM00729">
    <property type="entry name" value="Elp3"/>
    <property type="match status" value="1"/>
</dbReference>
<dbReference type="SUPFAM" id="SSF102114">
    <property type="entry name" value="Radical SAM enzymes"/>
    <property type="match status" value="1"/>
</dbReference>
<dbReference type="PROSITE" id="PS51918">
    <property type="entry name" value="RADICAL_SAM"/>
    <property type="match status" value="1"/>
</dbReference>
<feature type="chain" id="PRO_1000077970" description="Lipoyl synthase">
    <location>
        <begin position="1"/>
        <end position="321"/>
    </location>
</feature>
<feature type="domain" description="Radical SAM core" evidence="2">
    <location>
        <begin position="80"/>
        <end position="297"/>
    </location>
</feature>
<feature type="binding site" evidence="1">
    <location>
        <position position="68"/>
    </location>
    <ligand>
        <name>[4Fe-4S] cluster</name>
        <dbReference type="ChEBI" id="CHEBI:49883"/>
        <label>1</label>
    </ligand>
</feature>
<feature type="binding site" evidence="1">
    <location>
        <position position="73"/>
    </location>
    <ligand>
        <name>[4Fe-4S] cluster</name>
        <dbReference type="ChEBI" id="CHEBI:49883"/>
        <label>1</label>
    </ligand>
</feature>
<feature type="binding site" evidence="1">
    <location>
        <position position="79"/>
    </location>
    <ligand>
        <name>[4Fe-4S] cluster</name>
        <dbReference type="ChEBI" id="CHEBI:49883"/>
        <label>1</label>
    </ligand>
</feature>
<feature type="binding site" evidence="1">
    <location>
        <position position="94"/>
    </location>
    <ligand>
        <name>[4Fe-4S] cluster</name>
        <dbReference type="ChEBI" id="CHEBI:49883"/>
        <label>2</label>
        <note>4Fe-4S-S-AdoMet</note>
    </ligand>
</feature>
<feature type="binding site" evidence="1">
    <location>
        <position position="98"/>
    </location>
    <ligand>
        <name>[4Fe-4S] cluster</name>
        <dbReference type="ChEBI" id="CHEBI:49883"/>
        <label>2</label>
        <note>4Fe-4S-S-AdoMet</note>
    </ligand>
</feature>
<feature type="binding site" evidence="1">
    <location>
        <position position="101"/>
    </location>
    <ligand>
        <name>[4Fe-4S] cluster</name>
        <dbReference type="ChEBI" id="CHEBI:49883"/>
        <label>2</label>
        <note>4Fe-4S-S-AdoMet</note>
    </ligand>
</feature>
<feature type="binding site" evidence="1">
    <location>
        <position position="308"/>
    </location>
    <ligand>
        <name>[4Fe-4S] cluster</name>
        <dbReference type="ChEBI" id="CHEBI:49883"/>
        <label>1</label>
    </ligand>
</feature>
<proteinExistence type="inferred from homology"/>
<keyword id="KW-0004">4Fe-4S</keyword>
<keyword id="KW-0963">Cytoplasm</keyword>
<keyword id="KW-0408">Iron</keyword>
<keyword id="KW-0411">Iron-sulfur</keyword>
<keyword id="KW-0479">Metal-binding</keyword>
<keyword id="KW-1185">Reference proteome</keyword>
<keyword id="KW-0949">S-adenosyl-L-methionine</keyword>
<keyword id="KW-0808">Transferase</keyword>